<accession>P66334</accession>
<accession>Q99S20</accession>
<reference key="1">
    <citation type="journal article" date="2001" name="Lancet">
        <title>Whole genome sequencing of meticillin-resistant Staphylococcus aureus.</title>
        <authorList>
            <person name="Kuroda M."/>
            <person name="Ohta T."/>
            <person name="Uchiyama I."/>
            <person name="Baba T."/>
            <person name="Yuzawa H."/>
            <person name="Kobayashi I."/>
            <person name="Cui L."/>
            <person name="Oguchi A."/>
            <person name="Aoki K."/>
            <person name="Nagai Y."/>
            <person name="Lian J.-Q."/>
            <person name="Ito T."/>
            <person name="Kanamori M."/>
            <person name="Matsumaru H."/>
            <person name="Maruyama A."/>
            <person name="Murakami H."/>
            <person name="Hosoyama A."/>
            <person name="Mizutani-Ui Y."/>
            <person name="Takahashi N.K."/>
            <person name="Sawano T."/>
            <person name="Inoue R."/>
            <person name="Kaito C."/>
            <person name="Sekimizu K."/>
            <person name="Hirakawa H."/>
            <person name="Kuhara S."/>
            <person name="Goto S."/>
            <person name="Yabuzaki J."/>
            <person name="Kanehisa M."/>
            <person name="Yamashita A."/>
            <person name="Oshima K."/>
            <person name="Furuya K."/>
            <person name="Yoshino C."/>
            <person name="Shiba T."/>
            <person name="Hattori M."/>
            <person name="Ogasawara N."/>
            <person name="Hayashi H."/>
            <person name="Hiramatsu K."/>
        </authorList>
    </citation>
    <scope>NUCLEOTIDE SEQUENCE [LARGE SCALE GENOMIC DNA]</scope>
    <source>
        <strain>N315</strain>
    </source>
</reference>
<reference key="2">
    <citation type="submission" date="2005-11" db="UniProtKB">
        <title>Shotgun proteomic analysis of total protein extract of S. aureus S30 versus N315.</title>
        <authorList>
            <person name="Stenz L."/>
        </authorList>
    </citation>
    <scope>IDENTIFICATION BY MASS SPECTROMETRY</scope>
</reference>
<reference key="3">
    <citation type="submission" date="2007-10" db="UniProtKB">
        <title>Shotgun proteomic analysis of total and membrane protein extracts of S. aureus strain N315.</title>
        <authorList>
            <person name="Vaezzadeh A.R."/>
            <person name="Deshusses J."/>
            <person name="Lescuyer P."/>
            <person name="Hochstrasser D.F."/>
        </authorList>
    </citation>
    <scope>IDENTIFICATION BY MASS SPECTROMETRY [LARGE SCALE ANALYSIS]</scope>
    <source>
        <strain>N315</strain>
    </source>
</reference>
<organism>
    <name type="scientific">Staphylococcus aureus (strain N315)</name>
    <dbReference type="NCBI Taxonomy" id="158879"/>
    <lineage>
        <taxon>Bacteria</taxon>
        <taxon>Bacillati</taxon>
        <taxon>Bacillota</taxon>
        <taxon>Bacilli</taxon>
        <taxon>Bacillales</taxon>
        <taxon>Staphylococcaceae</taxon>
        <taxon>Staphylococcus</taxon>
    </lineage>
</organism>
<evidence type="ECO:0000255" key="1">
    <source>
        <dbReference type="HAMAP-Rule" id="MF_00508"/>
    </source>
</evidence>
<evidence type="ECO:0000305" key="2"/>
<dbReference type="EMBL" id="BA000018">
    <property type="protein sequence ID" value="BAB43343.1"/>
    <property type="molecule type" value="Genomic_DNA"/>
</dbReference>
<dbReference type="PIR" id="F90022">
    <property type="entry name" value="F90022"/>
</dbReference>
<dbReference type="RefSeq" id="WP_001118667.1">
    <property type="nucleotide sequence ID" value="NC_002745.2"/>
</dbReference>
<dbReference type="SMR" id="P66334"/>
<dbReference type="EnsemblBacteria" id="BAB43343">
    <property type="protein sequence ID" value="BAB43343"/>
    <property type="gene ID" value="BAB43343"/>
</dbReference>
<dbReference type="GeneID" id="98346563"/>
<dbReference type="KEGG" id="sau:SA2048"/>
<dbReference type="HOGENOM" id="CLU_122625_1_3_9"/>
<dbReference type="GO" id="GO:1990904">
    <property type="term" value="C:ribonucleoprotein complex"/>
    <property type="evidence" value="ECO:0007669"/>
    <property type="project" value="UniProtKB-KW"/>
</dbReference>
<dbReference type="GO" id="GO:0005840">
    <property type="term" value="C:ribosome"/>
    <property type="evidence" value="ECO:0007669"/>
    <property type="project" value="UniProtKB-KW"/>
</dbReference>
<dbReference type="GO" id="GO:0003735">
    <property type="term" value="F:structural constituent of ribosome"/>
    <property type="evidence" value="ECO:0007669"/>
    <property type="project" value="InterPro"/>
</dbReference>
<dbReference type="GO" id="GO:0000049">
    <property type="term" value="F:tRNA binding"/>
    <property type="evidence" value="ECO:0007669"/>
    <property type="project" value="UniProtKB-UniRule"/>
</dbReference>
<dbReference type="GO" id="GO:0006412">
    <property type="term" value="P:translation"/>
    <property type="evidence" value="ECO:0007669"/>
    <property type="project" value="UniProtKB-UniRule"/>
</dbReference>
<dbReference type="FunFam" id="3.30.70.600:FF:000001">
    <property type="entry name" value="30S ribosomal protein S10"/>
    <property type="match status" value="1"/>
</dbReference>
<dbReference type="Gene3D" id="3.30.70.600">
    <property type="entry name" value="Ribosomal protein S10 domain"/>
    <property type="match status" value="1"/>
</dbReference>
<dbReference type="HAMAP" id="MF_00508">
    <property type="entry name" value="Ribosomal_uS10"/>
    <property type="match status" value="1"/>
</dbReference>
<dbReference type="InterPro" id="IPR001848">
    <property type="entry name" value="Ribosomal_uS10"/>
</dbReference>
<dbReference type="InterPro" id="IPR018268">
    <property type="entry name" value="Ribosomal_uS10_CS"/>
</dbReference>
<dbReference type="InterPro" id="IPR027486">
    <property type="entry name" value="Ribosomal_uS10_dom"/>
</dbReference>
<dbReference type="InterPro" id="IPR036838">
    <property type="entry name" value="Ribosomal_uS10_dom_sf"/>
</dbReference>
<dbReference type="NCBIfam" id="NF001861">
    <property type="entry name" value="PRK00596.1"/>
    <property type="match status" value="1"/>
</dbReference>
<dbReference type="NCBIfam" id="TIGR01049">
    <property type="entry name" value="rpsJ_bact"/>
    <property type="match status" value="1"/>
</dbReference>
<dbReference type="PANTHER" id="PTHR11700">
    <property type="entry name" value="30S RIBOSOMAL PROTEIN S10 FAMILY MEMBER"/>
    <property type="match status" value="1"/>
</dbReference>
<dbReference type="Pfam" id="PF00338">
    <property type="entry name" value="Ribosomal_S10"/>
    <property type="match status" value="1"/>
</dbReference>
<dbReference type="PRINTS" id="PR00971">
    <property type="entry name" value="RIBOSOMALS10"/>
</dbReference>
<dbReference type="SMART" id="SM01403">
    <property type="entry name" value="Ribosomal_S10"/>
    <property type="match status" value="1"/>
</dbReference>
<dbReference type="SUPFAM" id="SSF54999">
    <property type="entry name" value="Ribosomal protein S10"/>
    <property type="match status" value="1"/>
</dbReference>
<dbReference type="PROSITE" id="PS00361">
    <property type="entry name" value="RIBOSOMAL_S10"/>
    <property type="match status" value="1"/>
</dbReference>
<comment type="function">
    <text evidence="1">Involved in the binding of tRNA to the ribosomes.</text>
</comment>
<comment type="subunit">
    <text evidence="1">Part of the 30S ribosomal subunit.</text>
</comment>
<comment type="similarity">
    <text evidence="1">Belongs to the universal ribosomal protein uS10 family.</text>
</comment>
<keyword id="KW-0687">Ribonucleoprotein</keyword>
<keyword id="KW-0689">Ribosomal protein</keyword>
<gene>
    <name evidence="1" type="primary">rpsJ</name>
    <name type="ordered locus">SA2048</name>
</gene>
<protein>
    <recommendedName>
        <fullName evidence="1">Small ribosomal subunit protein uS10</fullName>
    </recommendedName>
    <alternativeName>
        <fullName evidence="2">30S ribosomal protein S10</fullName>
    </alternativeName>
</protein>
<feature type="chain" id="PRO_0000146596" description="Small ribosomal subunit protein uS10">
    <location>
        <begin position="1"/>
        <end position="102"/>
    </location>
</feature>
<name>RS10_STAAN</name>
<sequence>MAKQKIRIRLKAYDHRVIDQSAEKIVETAKRSGADVSGPIPLPTEKSVYTIIRAVHKYKDSREQFEQRTHKRLIDIVNPTPKTVDALMGLNLPSGVDIEIKL</sequence>
<proteinExistence type="evidence at protein level"/>